<dbReference type="EMBL" id="AY514452">
    <property type="protein sequence ID" value="AAS83466.1"/>
    <property type="molecule type" value="Genomic_DNA"/>
</dbReference>
<dbReference type="GO" id="GO:0020003">
    <property type="term" value="C:symbiont-containing vacuole"/>
    <property type="evidence" value="ECO:0000314"/>
    <property type="project" value="UniProtKB"/>
</dbReference>
<dbReference type="GO" id="GO:0051015">
    <property type="term" value="F:actin filament binding"/>
    <property type="evidence" value="ECO:0000314"/>
    <property type="project" value="UniProtKB"/>
</dbReference>
<dbReference type="GO" id="GO:0051701">
    <property type="term" value="P:biological process involved in interaction with host"/>
    <property type="evidence" value="ECO:0000314"/>
    <property type="project" value="UniProtKB"/>
</dbReference>
<name>AAAP_ANAML</name>
<accession>Q5SF94</accession>
<organism>
    <name type="scientific">Anaplasma marginale (strain Illinois)</name>
    <dbReference type="NCBI Taxonomy" id="403778"/>
    <lineage>
        <taxon>Bacteria</taxon>
        <taxon>Pseudomonadati</taxon>
        <taxon>Pseudomonadota</taxon>
        <taxon>Alphaproteobacteria</taxon>
        <taxon>Rickettsiales</taxon>
        <taxon>Anaplasmataceae</taxon>
        <taxon>Anaplasma</taxon>
    </lineage>
</organism>
<sequence length="364" mass="39832">MGCPVSRGGSPGCGRRIAEELRFFVVDREASMCGDSCNGGGDRQQRQELAAAARASLLCLGGVMQQHITAAKARAELRKELDAIDAEWRPVIARESLRKELKAIDAQWQHAITFLRISRAIVVSIELSKELKAIDAGWEPVIIHEAQKKKREREERVAQVRRELRAELRAIDAEWRLVIARESLRKELDAIDAECRHTIKLRSALRAIEGRMELSKELKAIDAEWRPAIRLESAYRAIIGSIELSKELKAIDAETQHAVELRRALRTIEGRIELSRELKAIDAEWAPRIAQAELAAAADALKRAADKLQALGKMDTTSTPGTDLIGVVTTAIATLAAAGMQPAPSTALTGVAAEVATPSTALGV</sequence>
<feature type="signal peptide" evidence="3">
    <location>
        <begin position="1"/>
        <end status="unknown"/>
    </location>
</feature>
<feature type="chain" id="PRO_0000258016" description="Appendage-associated protein" evidence="3">
    <location>
        <begin status="unknown"/>
        <end position="364"/>
    </location>
</feature>
<feature type="coiled-coil region" evidence="1">
    <location>
        <begin position="142"/>
        <end position="196"/>
    </location>
</feature>
<feature type="coiled-coil region" evidence="1">
    <location>
        <begin position="288"/>
        <end position="313"/>
    </location>
</feature>
<evidence type="ECO:0000255" key="1"/>
<evidence type="ECO:0000269" key="2">
    <source>
    </source>
</evidence>
<evidence type="ECO:0000305" key="3"/>
<evidence type="ECO:0000312" key="4">
    <source>
        <dbReference type="EMBL" id="AAS83466.1"/>
    </source>
</evidence>
<comment type="function">
    <text evidence="2">Associates with actin filament appendages that are formed in the inclusion appendages of the parasitophorous vacuole during infection of the host erythrocyte.</text>
</comment>
<comment type="subcellular location">
    <subcellularLocation>
        <location evidence="2">Secreted</location>
    </subcellularLocation>
</comment>
<reference evidence="3 4" key="1">
    <citation type="journal article" date="2004" name="Infect. Immun.">
        <title>Identification of a novel Anaplasma marginale appendage-associated protein that localizes with actin filaments during intraerythrocytic infection.</title>
        <authorList>
            <person name="Stich R.W."/>
            <person name="Olah G.A."/>
            <person name="Brayton K.A."/>
            <person name="Brown W.C."/>
            <person name="Fecheimer M."/>
            <person name="Green-Church K."/>
            <person name="Jittapalapong S."/>
            <person name="Kocan K.M."/>
            <person name="McGuire T.C."/>
            <person name="Rurangirwa F.R."/>
            <person name="Palmer G.H."/>
        </authorList>
    </citation>
    <scope>NUCLEOTIDE SEQUENCE [GENOMIC DNA]</scope>
    <scope>FUNCTION</scope>
    <scope>SUBCELLULAR LOCATION</scope>
</reference>
<proteinExistence type="predicted"/>
<protein>
    <recommendedName>
        <fullName>Appendage-associated protein</fullName>
    </recommendedName>
</protein>
<keyword id="KW-0175">Coiled coil</keyword>
<keyword id="KW-0964">Secreted</keyword>
<keyword id="KW-0732">Signal</keyword>
<gene>
    <name evidence="4" type="primary">aaaP</name>
</gene>